<organism>
    <name type="scientific">Mycobacterium sp. (strain MCS)</name>
    <dbReference type="NCBI Taxonomy" id="164756"/>
    <lineage>
        <taxon>Bacteria</taxon>
        <taxon>Bacillati</taxon>
        <taxon>Actinomycetota</taxon>
        <taxon>Actinomycetes</taxon>
        <taxon>Mycobacteriales</taxon>
        <taxon>Mycobacteriaceae</taxon>
        <taxon>Mycobacterium</taxon>
    </lineage>
</organism>
<keyword id="KW-0963">Cytoplasm</keyword>
<keyword id="KW-0690">Ribosome biogenesis</keyword>
<reference key="1">
    <citation type="submission" date="2006-06" db="EMBL/GenBank/DDBJ databases">
        <title>Complete sequence of chromosome of Mycobacterium sp. MCS.</title>
        <authorList>
            <consortium name="US DOE Joint Genome Institute"/>
            <person name="Copeland A."/>
            <person name="Lucas S."/>
            <person name="Lapidus A."/>
            <person name="Barry K."/>
            <person name="Detter J.C."/>
            <person name="Glavina del Rio T."/>
            <person name="Hammon N."/>
            <person name="Israni S."/>
            <person name="Dalin E."/>
            <person name="Tice H."/>
            <person name="Pitluck S."/>
            <person name="Martinez M."/>
            <person name="Schmutz J."/>
            <person name="Larimer F."/>
            <person name="Land M."/>
            <person name="Hauser L."/>
            <person name="Kyrpides N."/>
            <person name="Kim E."/>
            <person name="Miller C.D."/>
            <person name="Hughes J.E."/>
            <person name="Anderson A.J."/>
            <person name="Sims R.C."/>
            <person name="Richardson P."/>
        </authorList>
    </citation>
    <scope>NUCLEOTIDE SEQUENCE [LARGE SCALE GENOMIC DNA]</scope>
    <source>
        <strain>MCS</strain>
    </source>
</reference>
<comment type="function">
    <text evidence="1">One of several proteins that assist in the late maturation steps of the functional core of the 30S ribosomal subunit. Associates with free 30S ribosomal subunits (but not with 30S subunits that are part of 70S ribosomes or polysomes). Required for efficient processing of 16S rRNA. May interact with the 5'-terminal helix region of 16S rRNA.</text>
</comment>
<comment type="subunit">
    <text evidence="1">Monomer. Binds 30S ribosomal subunits, but not 50S ribosomal subunits or 70S ribosomes.</text>
</comment>
<comment type="subcellular location">
    <subcellularLocation>
        <location evidence="1">Cytoplasm</location>
    </subcellularLocation>
</comment>
<comment type="similarity">
    <text evidence="1">Belongs to the RbfA family.</text>
</comment>
<gene>
    <name evidence="1" type="primary">rbfA</name>
    <name type="ordered locus">Mmcs_2083</name>
</gene>
<accession>Q1BA93</accession>
<protein>
    <recommendedName>
        <fullName evidence="1">Ribosome-binding factor A</fullName>
    </recommendedName>
</protein>
<feature type="chain" id="PRO_1000000146" description="Ribosome-binding factor A">
    <location>
        <begin position="1"/>
        <end position="171"/>
    </location>
</feature>
<feature type="region of interest" description="Disordered" evidence="2">
    <location>
        <begin position="126"/>
        <end position="171"/>
    </location>
</feature>
<feature type="compositionally biased region" description="Basic and acidic residues" evidence="2">
    <location>
        <begin position="126"/>
        <end position="138"/>
    </location>
</feature>
<name>RBFA_MYCSS</name>
<evidence type="ECO:0000255" key="1">
    <source>
        <dbReference type="HAMAP-Rule" id="MF_00003"/>
    </source>
</evidence>
<evidence type="ECO:0000256" key="2">
    <source>
        <dbReference type="SAM" id="MobiDB-lite"/>
    </source>
</evidence>
<sequence>MADPARAKRLAKRISTIVASAIEYEIKDPRLAGVTITDSKVTNDLHDATLYYTVLGRSLDEEPDYAGAAAALEKAKGVLRTKVGAGTGVRFTPTLAFVRDTVPDTAHRMEELLARARAADEDLARVREGAKHAGDADPYRVSGVEEEAGGSGEVQAEFDAEDTGDRNRQDD</sequence>
<dbReference type="EMBL" id="CP000384">
    <property type="protein sequence ID" value="ABG08191.1"/>
    <property type="molecule type" value="Genomic_DNA"/>
</dbReference>
<dbReference type="SMR" id="Q1BA93"/>
<dbReference type="KEGG" id="mmc:Mmcs_2083"/>
<dbReference type="HOGENOM" id="CLU_089475_0_0_11"/>
<dbReference type="BioCyc" id="MSP164756:G1G6O-2129-MONOMER"/>
<dbReference type="GO" id="GO:0005829">
    <property type="term" value="C:cytosol"/>
    <property type="evidence" value="ECO:0007669"/>
    <property type="project" value="TreeGrafter"/>
</dbReference>
<dbReference type="GO" id="GO:0043024">
    <property type="term" value="F:ribosomal small subunit binding"/>
    <property type="evidence" value="ECO:0007669"/>
    <property type="project" value="TreeGrafter"/>
</dbReference>
<dbReference type="GO" id="GO:0030490">
    <property type="term" value="P:maturation of SSU-rRNA"/>
    <property type="evidence" value="ECO:0007669"/>
    <property type="project" value="UniProtKB-UniRule"/>
</dbReference>
<dbReference type="FunFam" id="3.30.300.20:FF:000018">
    <property type="entry name" value="Ribosome-binding factor A"/>
    <property type="match status" value="1"/>
</dbReference>
<dbReference type="Gene3D" id="3.30.300.20">
    <property type="match status" value="1"/>
</dbReference>
<dbReference type="HAMAP" id="MF_00003">
    <property type="entry name" value="RbfA"/>
    <property type="match status" value="1"/>
</dbReference>
<dbReference type="InterPro" id="IPR015946">
    <property type="entry name" value="KH_dom-like_a/b"/>
</dbReference>
<dbReference type="InterPro" id="IPR000238">
    <property type="entry name" value="RbfA"/>
</dbReference>
<dbReference type="InterPro" id="IPR023799">
    <property type="entry name" value="RbfA_dom_sf"/>
</dbReference>
<dbReference type="InterPro" id="IPR020053">
    <property type="entry name" value="Ribosome-bd_factorA_CS"/>
</dbReference>
<dbReference type="NCBIfam" id="TIGR00082">
    <property type="entry name" value="rbfA"/>
    <property type="match status" value="1"/>
</dbReference>
<dbReference type="PANTHER" id="PTHR33515">
    <property type="entry name" value="RIBOSOME-BINDING FACTOR A, CHLOROPLASTIC-RELATED"/>
    <property type="match status" value="1"/>
</dbReference>
<dbReference type="PANTHER" id="PTHR33515:SF1">
    <property type="entry name" value="RIBOSOME-BINDING FACTOR A, CHLOROPLASTIC-RELATED"/>
    <property type="match status" value="1"/>
</dbReference>
<dbReference type="Pfam" id="PF02033">
    <property type="entry name" value="RBFA"/>
    <property type="match status" value="1"/>
</dbReference>
<dbReference type="SUPFAM" id="SSF89919">
    <property type="entry name" value="Ribosome-binding factor A, RbfA"/>
    <property type="match status" value="1"/>
</dbReference>
<dbReference type="PROSITE" id="PS01319">
    <property type="entry name" value="RBFA"/>
    <property type="match status" value="1"/>
</dbReference>
<proteinExistence type="inferred from homology"/>